<sequence>MPRGLELLIAQTILQGFDAQYGRFLEVTSGAQQRFEQADWHAVQLAMKNRIHLYDHHVGLVVEQLRCITNGQSTDAAFLLRVKEHYTRLLPDYPRFEIAESFFNSVYCRLFDHRSLTPERLFIFSSQPERRFRTIPRPLAKDFHPDHGWESLLMRVISDLPLRLRWQNKSRDIHYIIRHLTETLGTDNLAESHLQVANELFYRNKAAWLVGKLITPSGTLPFLLPIHQTDDGELFIDTCLTTTAEASIVFGFARSYFMVYAALVEWLREILPGKTTAELYMAIGCQKHAKTESYREYLVYLQGCNEQFIEAPGIRGMVMLVFTLPGFDRVFKVIKDKFAPQKEMSAAHVRACYQLVKEHDRVGRMADTQEFENFVLEKRHISPALMELLLQEAAEKITDLGEQIVIRHLYIERRMVPLNIWLEQVEGQQLRDAIEEYGNAIRQLAAANIFPGDMLFKNFGVTRHGRVVFYDYDEICYMTEVNFRDIPPPRYPEDELASEPWYSVSPGDVFPEEFRHWLCADPRIGPLFEEMHADLFRADYWRALQNRIREGHVEDVYAYRRRQRFSVRYGEMLF</sequence>
<dbReference type="EC" id="2.7.11.5" evidence="1"/>
<dbReference type="EC" id="3.1.3.-" evidence="1"/>
<dbReference type="EMBL" id="CP000036">
    <property type="protein sequence ID" value="ABB68471.1"/>
    <property type="molecule type" value="Genomic_DNA"/>
</dbReference>
<dbReference type="RefSeq" id="WP_001137199.1">
    <property type="nucleotide sequence ID" value="NC_007613.1"/>
</dbReference>
<dbReference type="SMR" id="Q31TY7"/>
<dbReference type="KEGG" id="sbo:SBO_4036"/>
<dbReference type="HOGENOM" id="CLU_033804_1_1_6"/>
<dbReference type="Proteomes" id="UP000007067">
    <property type="component" value="Chromosome"/>
</dbReference>
<dbReference type="GO" id="GO:0005737">
    <property type="term" value="C:cytoplasm"/>
    <property type="evidence" value="ECO:0007669"/>
    <property type="project" value="UniProtKB-SubCell"/>
</dbReference>
<dbReference type="GO" id="GO:0008772">
    <property type="term" value="F:[isocitrate dehydrogenase (NADP+)] kinase activity"/>
    <property type="evidence" value="ECO:0007669"/>
    <property type="project" value="UniProtKB-UniRule"/>
</dbReference>
<dbReference type="GO" id="GO:0016208">
    <property type="term" value="F:AMP binding"/>
    <property type="evidence" value="ECO:0007669"/>
    <property type="project" value="TreeGrafter"/>
</dbReference>
<dbReference type="GO" id="GO:0005524">
    <property type="term" value="F:ATP binding"/>
    <property type="evidence" value="ECO:0007669"/>
    <property type="project" value="UniProtKB-UniRule"/>
</dbReference>
<dbReference type="GO" id="GO:0004721">
    <property type="term" value="F:phosphoprotein phosphatase activity"/>
    <property type="evidence" value="ECO:0007669"/>
    <property type="project" value="UniProtKB-KW"/>
</dbReference>
<dbReference type="GO" id="GO:0004674">
    <property type="term" value="F:protein serine/threonine kinase activity"/>
    <property type="evidence" value="ECO:0007669"/>
    <property type="project" value="UniProtKB-KW"/>
</dbReference>
<dbReference type="GO" id="GO:0006006">
    <property type="term" value="P:glucose metabolic process"/>
    <property type="evidence" value="ECO:0007669"/>
    <property type="project" value="InterPro"/>
</dbReference>
<dbReference type="GO" id="GO:0006097">
    <property type="term" value="P:glyoxylate cycle"/>
    <property type="evidence" value="ECO:0007669"/>
    <property type="project" value="UniProtKB-UniRule"/>
</dbReference>
<dbReference type="GO" id="GO:0006099">
    <property type="term" value="P:tricarboxylic acid cycle"/>
    <property type="evidence" value="ECO:0007669"/>
    <property type="project" value="UniProtKB-UniRule"/>
</dbReference>
<dbReference type="HAMAP" id="MF_00747">
    <property type="entry name" value="AceK"/>
    <property type="match status" value="1"/>
</dbReference>
<dbReference type="InterPro" id="IPR046855">
    <property type="entry name" value="AceK_kinase"/>
</dbReference>
<dbReference type="InterPro" id="IPR046854">
    <property type="entry name" value="AceK_regulatory"/>
</dbReference>
<dbReference type="InterPro" id="IPR010452">
    <property type="entry name" value="Isocitrate_DH_AceK"/>
</dbReference>
<dbReference type="NCBIfam" id="NF002804">
    <property type="entry name" value="PRK02946.1"/>
    <property type="match status" value="1"/>
</dbReference>
<dbReference type="PANTHER" id="PTHR39559">
    <property type="match status" value="1"/>
</dbReference>
<dbReference type="PANTHER" id="PTHR39559:SF1">
    <property type="entry name" value="ISOCITRATE DEHYDROGENASE KINASE_PHOSPHATASE"/>
    <property type="match status" value="1"/>
</dbReference>
<dbReference type="Pfam" id="PF06315">
    <property type="entry name" value="AceK_kinase"/>
    <property type="match status" value="1"/>
</dbReference>
<dbReference type="Pfam" id="PF20423">
    <property type="entry name" value="AceK_regulatory"/>
    <property type="match status" value="1"/>
</dbReference>
<dbReference type="PIRSF" id="PIRSF000719">
    <property type="entry name" value="AceK"/>
    <property type="match status" value="1"/>
</dbReference>
<feature type="chain" id="PRO_0000259157" description="Isocitrate dehydrogenase kinase/phosphatase">
    <location>
        <begin position="1"/>
        <end position="574"/>
    </location>
</feature>
<feature type="active site" evidence="1">
    <location>
        <position position="367"/>
    </location>
</feature>
<feature type="binding site" evidence="1">
    <location>
        <begin position="311"/>
        <end position="317"/>
    </location>
    <ligand>
        <name>ATP</name>
        <dbReference type="ChEBI" id="CHEBI:30616"/>
    </ligand>
</feature>
<feature type="binding site" evidence="1">
    <location>
        <position position="332"/>
    </location>
    <ligand>
        <name>ATP</name>
        <dbReference type="ChEBI" id="CHEBI:30616"/>
    </ligand>
</feature>
<reference key="1">
    <citation type="journal article" date="2005" name="Nucleic Acids Res.">
        <title>Genome dynamics and diversity of Shigella species, the etiologic agents of bacillary dysentery.</title>
        <authorList>
            <person name="Yang F."/>
            <person name="Yang J."/>
            <person name="Zhang X."/>
            <person name="Chen L."/>
            <person name="Jiang Y."/>
            <person name="Yan Y."/>
            <person name="Tang X."/>
            <person name="Wang J."/>
            <person name="Xiong Z."/>
            <person name="Dong J."/>
            <person name="Xue Y."/>
            <person name="Zhu Y."/>
            <person name="Xu X."/>
            <person name="Sun L."/>
            <person name="Chen S."/>
            <person name="Nie H."/>
            <person name="Peng J."/>
            <person name="Xu J."/>
            <person name="Wang Y."/>
            <person name="Yuan Z."/>
            <person name="Wen Y."/>
            <person name="Yao Z."/>
            <person name="Shen Y."/>
            <person name="Qiang B."/>
            <person name="Hou Y."/>
            <person name="Yu J."/>
            <person name="Jin Q."/>
        </authorList>
    </citation>
    <scope>NUCLEOTIDE SEQUENCE [LARGE SCALE GENOMIC DNA]</scope>
    <source>
        <strain>Sb227</strain>
    </source>
</reference>
<organism>
    <name type="scientific">Shigella boydii serotype 4 (strain Sb227)</name>
    <dbReference type="NCBI Taxonomy" id="300268"/>
    <lineage>
        <taxon>Bacteria</taxon>
        <taxon>Pseudomonadati</taxon>
        <taxon>Pseudomonadota</taxon>
        <taxon>Gammaproteobacteria</taxon>
        <taxon>Enterobacterales</taxon>
        <taxon>Enterobacteriaceae</taxon>
        <taxon>Shigella</taxon>
    </lineage>
</organism>
<name>ACEK_SHIBS</name>
<protein>
    <recommendedName>
        <fullName evidence="1">Isocitrate dehydrogenase kinase/phosphatase</fullName>
        <shortName evidence="1">IDH kinase/phosphatase</shortName>
        <shortName evidence="1">IDHK/P</shortName>
        <ecNumber evidence="1">2.7.11.5</ecNumber>
        <ecNumber evidence="1">3.1.3.-</ecNumber>
    </recommendedName>
</protein>
<proteinExistence type="inferred from homology"/>
<gene>
    <name evidence="1" type="primary">aceK</name>
    <name type="ordered locus">SBO_4036</name>
</gene>
<keyword id="KW-0067">ATP-binding</keyword>
<keyword id="KW-0963">Cytoplasm</keyword>
<keyword id="KW-0329">Glyoxylate bypass</keyword>
<keyword id="KW-0378">Hydrolase</keyword>
<keyword id="KW-0418">Kinase</keyword>
<keyword id="KW-0547">Nucleotide-binding</keyword>
<keyword id="KW-0904">Protein phosphatase</keyword>
<keyword id="KW-0723">Serine/threonine-protein kinase</keyword>
<keyword id="KW-0808">Transferase</keyword>
<keyword id="KW-0816">Tricarboxylic acid cycle</keyword>
<comment type="function">
    <text evidence="1">Bifunctional enzyme which can phosphorylate or dephosphorylate isocitrate dehydrogenase (IDH) on a specific serine residue. This is a regulatory mechanism which enables bacteria to bypass the Krebs cycle via the glyoxylate shunt in response to the source of carbon. When bacteria are grown on glucose, IDH is fully active and unphosphorylated, but when grown on acetate or ethanol, the activity of IDH declines drastically concomitant with its phosphorylation.</text>
</comment>
<comment type="catalytic activity">
    <reaction evidence="1">
        <text>L-seryl-[isocitrate dehydrogenase] + ATP = O-phospho-L-seryl-[isocitrate dehydrogenase] + ADP + H(+)</text>
        <dbReference type="Rhea" id="RHEA:43540"/>
        <dbReference type="Rhea" id="RHEA-COMP:10605"/>
        <dbReference type="Rhea" id="RHEA-COMP:10606"/>
        <dbReference type="ChEBI" id="CHEBI:15378"/>
        <dbReference type="ChEBI" id="CHEBI:29999"/>
        <dbReference type="ChEBI" id="CHEBI:30616"/>
        <dbReference type="ChEBI" id="CHEBI:83421"/>
        <dbReference type="ChEBI" id="CHEBI:456216"/>
        <dbReference type="EC" id="2.7.11.5"/>
    </reaction>
</comment>
<comment type="subcellular location">
    <subcellularLocation>
        <location evidence="1">Cytoplasm</location>
    </subcellularLocation>
</comment>
<comment type="similarity">
    <text evidence="1">Belongs to the AceK family.</text>
</comment>
<accession>Q31TY7</accession>
<evidence type="ECO:0000255" key="1">
    <source>
        <dbReference type="HAMAP-Rule" id="MF_00747"/>
    </source>
</evidence>